<organism>
    <name type="scientific">Pongo abelii</name>
    <name type="common">Sumatran orangutan</name>
    <name type="synonym">Pongo pygmaeus abelii</name>
    <dbReference type="NCBI Taxonomy" id="9601"/>
    <lineage>
        <taxon>Eukaryota</taxon>
        <taxon>Metazoa</taxon>
        <taxon>Chordata</taxon>
        <taxon>Craniata</taxon>
        <taxon>Vertebrata</taxon>
        <taxon>Euteleostomi</taxon>
        <taxon>Mammalia</taxon>
        <taxon>Eutheria</taxon>
        <taxon>Euarchontoglires</taxon>
        <taxon>Primates</taxon>
        <taxon>Haplorrhini</taxon>
        <taxon>Catarrhini</taxon>
        <taxon>Hominidae</taxon>
        <taxon>Pongo</taxon>
    </lineage>
</organism>
<keyword id="KW-0007">Acetylation</keyword>
<keyword id="KW-0249">Electron transport</keyword>
<keyword id="KW-0472">Membrane</keyword>
<keyword id="KW-0496">Mitochondrion</keyword>
<keyword id="KW-0999">Mitochondrion inner membrane</keyword>
<keyword id="KW-1185">Reference proteome</keyword>
<keyword id="KW-0679">Respiratory chain</keyword>
<keyword id="KW-0813">Transport</keyword>
<name>QCR7_PONAB</name>
<evidence type="ECO:0000250" key="1">
    <source>
        <dbReference type="UniProtKB" id="P00128"/>
    </source>
</evidence>
<evidence type="ECO:0000250" key="2">
    <source>
        <dbReference type="UniProtKB" id="P00129"/>
    </source>
</evidence>
<evidence type="ECO:0000250" key="3">
    <source>
        <dbReference type="UniProtKB" id="P14927"/>
    </source>
</evidence>
<evidence type="ECO:0000250" key="4">
    <source>
        <dbReference type="UniProtKB" id="Q9D855"/>
    </source>
</evidence>
<evidence type="ECO:0000305" key="5"/>
<gene>
    <name type="primary">UQCRB</name>
</gene>
<accession>Q5RC24</accession>
<comment type="function">
    <text evidence="1">Component of the ubiquinol-cytochrome c oxidoreductase, a multisubunit transmembrane complex that is part of the mitochondrial electron transport chain which drives oxidative phosphorylation. The respiratory chain contains 3 multisubunit complexes succinate dehydrogenase (complex II, CII), ubiquinol-cytochrome c oxidoreductase (cytochrome b-c1 complex, complex III, CIII) and cytochrome c oxidase (complex IV, CIV), that cooperate to transfer electrons derived from NADH and succinate to molecular oxygen, creating an electrochemical gradient over the inner membrane that drives transmembrane transport and the ATP synthase. The cytochrome b-c1 complex catalyzes electron transfer from ubiquinol to cytochrome c, linking this redox reaction to translocation of protons across the mitochondrial inner membrane, with protons being carried across the membrane as hydrogens on the quinol. In the process called Q cycle, 2 protons are consumed from the matrix, 4 protons are released into the intermembrane space and 2 electrons are passed to cytochrome c.</text>
</comment>
<comment type="subunit">
    <text evidence="2 3">Component of the ubiquinol-cytochrome c oxidoreductase (cytochrome b-c1 complex, complex III, CIII), a multisubunit enzyme composed of 11 subunits. The complex is composed of 3 respiratory subunits cytochrome b, cytochrome c1 and Rieske protein UQCRFS1, 2 core protein subunits UQCRC1/QCR1 and UQCRC2/QCR2, and 6 low-molecular weight protein subunits UQCRH/QCR6, UQCRB/QCR7, UQCRQ/QCR8, UQCR10/QCR9, UQCR11/QCR10 and subunit 9, the cleavage product of Rieske protein UQCRFS1 (By similarity). The complex exists as an obligatory dimer and forms supercomplexes (SCs) in the inner mitochondrial membrane with NADH-ubiquinone oxidoreductase (complex I, CI) and cytochrome c oxidase (complex IV, CIV), resulting in different assemblies (supercomplex SCI(1)III(2)IV(1) and megacomplex MCI(2)III(2)IV(2)) (By similarity).</text>
</comment>
<comment type="subcellular location">
    <subcellularLocation>
        <location evidence="1">Mitochondrion inner membrane</location>
        <topology evidence="1">Peripheral membrane protein</topology>
        <orientation evidence="1">Matrix side</orientation>
    </subcellularLocation>
</comment>
<comment type="similarity">
    <text evidence="5">Belongs to the UQCRB/QCR7 family.</text>
</comment>
<proteinExistence type="inferred from homology"/>
<dbReference type="EMBL" id="CR858458">
    <property type="protein sequence ID" value="CAH90686.1"/>
    <property type="molecule type" value="mRNA"/>
</dbReference>
<dbReference type="RefSeq" id="NP_001125376.1">
    <property type="nucleotide sequence ID" value="NM_001131904.2"/>
</dbReference>
<dbReference type="SMR" id="Q5RC24"/>
<dbReference type="FunCoup" id="Q5RC24">
    <property type="interactions" value="724"/>
</dbReference>
<dbReference type="STRING" id="9601.ENSPPYP00000021046"/>
<dbReference type="Ensembl" id="ENSPPYT00000021888.3">
    <property type="protein sequence ID" value="ENSPPYP00000021046.2"/>
    <property type="gene ID" value="ENSPPYG00000018763.3"/>
</dbReference>
<dbReference type="GeneID" id="100172279"/>
<dbReference type="KEGG" id="pon:100172279"/>
<dbReference type="CTD" id="7381"/>
<dbReference type="eggNOG" id="KOG3440">
    <property type="taxonomic scope" value="Eukaryota"/>
</dbReference>
<dbReference type="GeneTree" id="ENSGT00390000012916"/>
<dbReference type="HOGENOM" id="CLU_115154_2_0_1"/>
<dbReference type="InParanoid" id="Q5RC24"/>
<dbReference type="OMA" id="PLAQWYT"/>
<dbReference type="OrthoDB" id="425749at2759"/>
<dbReference type="TreeFam" id="TF105035"/>
<dbReference type="Proteomes" id="UP000001595">
    <property type="component" value="Chromosome 8"/>
</dbReference>
<dbReference type="GO" id="GO:0005743">
    <property type="term" value="C:mitochondrial inner membrane"/>
    <property type="evidence" value="ECO:0007669"/>
    <property type="project" value="UniProtKB-SubCell"/>
</dbReference>
<dbReference type="GO" id="GO:0045275">
    <property type="term" value="C:respiratory chain complex III"/>
    <property type="evidence" value="ECO:0007669"/>
    <property type="project" value="InterPro"/>
</dbReference>
<dbReference type="GO" id="GO:0006122">
    <property type="term" value="P:mitochondrial electron transport, ubiquinol to cytochrome c"/>
    <property type="evidence" value="ECO:0007669"/>
    <property type="project" value="InterPro"/>
</dbReference>
<dbReference type="FunFam" id="1.10.1090.10:FF:000001">
    <property type="entry name" value="Cytochrome b-c1 complex subunit 7"/>
    <property type="match status" value="1"/>
</dbReference>
<dbReference type="Gene3D" id="1.10.1090.10">
    <property type="entry name" value="Cytochrome b-c1 complex subunit 7"/>
    <property type="match status" value="1"/>
</dbReference>
<dbReference type="InterPro" id="IPR003197">
    <property type="entry name" value="QCR7"/>
</dbReference>
<dbReference type="InterPro" id="IPR036544">
    <property type="entry name" value="QCR7_sf"/>
</dbReference>
<dbReference type="PANTHER" id="PTHR12022:SF12">
    <property type="entry name" value="CYTOCHROME B-C1 COMPLEX SUBUNIT 7"/>
    <property type="match status" value="1"/>
</dbReference>
<dbReference type="PANTHER" id="PTHR12022">
    <property type="entry name" value="UBIQUINOL-CYTOCHROME C REDUCTASE COMPLEX 14 KD PROTEIN"/>
    <property type="match status" value="1"/>
</dbReference>
<dbReference type="Pfam" id="PF02271">
    <property type="entry name" value="UCR_14kD"/>
    <property type="match status" value="1"/>
</dbReference>
<dbReference type="PIRSF" id="PIRSF000022">
    <property type="entry name" value="Bc1_14K"/>
    <property type="match status" value="1"/>
</dbReference>
<dbReference type="SUPFAM" id="SSF81524">
    <property type="entry name" value="14 kDa protein of cytochrome bc1 complex (Ubiquinol-cytochrome c reductase)"/>
    <property type="match status" value="1"/>
</dbReference>
<feature type="initiator methionine" description="Removed" evidence="2">
    <location>
        <position position="1"/>
    </location>
</feature>
<feature type="chain" id="PRO_0000193526" description="Cytochrome b-c1 complex subunit 7">
    <location>
        <begin position="2"/>
        <end position="111"/>
    </location>
</feature>
<feature type="modified residue" description="N-acetylalanine" evidence="2">
    <location>
        <position position="2"/>
    </location>
</feature>
<feature type="modified residue" description="N6-acetyllysine; alternate" evidence="4">
    <location>
        <position position="12"/>
    </location>
</feature>
<feature type="modified residue" description="N6-succinyllysine; alternate" evidence="4">
    <location>
        <position position="12"/>
    </location>
</feature>
<feature type="modified residue" description="N6-acetyllysine" evidence="4">
    <location>
        <position position="19"/>
    </location>
</feature>
<feature type="modified residue" description="N6-acetyllysine; alternate" evidence="4">
    <location>
        <position position="78"/>
    </location>
</feature>
<feature type="modified residue" description="N6-succinyllysine; alternate" evidence="4">
    <location>
        <position position="78"/>
    </location>
</feature>
<feature type="modified residue" description="N6-acetyllysine" evidence="4">
    <location>
        <position position="83"/>
    </location>
</feature>
<feature type="modified residue" description="N6-acetyllysine" evidence="4">
    <location>
        <position position="96"/>
    </location>
</feature>
<protein>
    <recommendedName>
        <fullName>Cytochrome b-c1 complex subunit 7</fullName>
    </recommendedName>
    <alternativeName>
        <fullName>Complex III subunit 7</fullName>
    </alternativeName>
    <alternativeName>
        <fullName>Complex III subunit VII</fullName>
    </alternativeName>
    <alternativeName>
        <fullName>Ubiquinol-cytochrome c reductase complex 14 kDa protein</fullName>
    </alternativeName>
</protein>
<reference key="1">
    <citation type="submission" date="2004-11" db="EMBL/GenBank/DDBJ databases">
        <authorList>
            <consortium name="The German cDNA consortium"/>
        </authorList>
    </citation>
    <scope>NUCLEOTIDE SEQUENCE [LARGE SCALE MRNA]</scope>
    <source>
        <tissue>Heart</tissue>
    </source>
</reference>
<sequence>MAGKQAVSASGKWLDGIRKWYYNAAGFNKLGLMRDDTIYEDEDVKEAIRRLPENLYNDRMFRIKRALDLSLKHQILPKEQWTKYEEENFYLEPYLKEVIRERKEREEWAKK</sequence>